<organism>
    <name type="scientific">Rattus norvegicus</name>
    <name type="common">Rat</name>
    <dbReference type="NCBI Taxonomy" id="10116"/>
    <lineage>
        <taxon>Eukaryota</taxon>
        <taxon>Metazoa</taxon>
        <taxon>Chordata</taxon>
        <taxon>Craniata</taxon>
        <taxon>Vertebrata</taxon>
        <taxon>Euteleostomi</taxon>
        <taxon>Mammalia</taxon>
        <taxon>Eutheria</taxon>
        <taxon>Euarchontoglires</taxon>
        <taxon>Glires</taxon>
        <taxon>Rodentia</taxon>
        <taxon>Myomorpha</taxon>
        <taxon>Muroidea</taxon>
        <taxon>Muridae</taxon>
        <taxon>Murinae</taxon>
        <taxon>Rattus</taxon>
    </lineage>
</organism>
<gene>
    <name type="primary">Mks1</name>
</gene>
<feature type="chain" id="PRO_0000225688" description="Tectonic-like complex member MKS1">
    <location>
        <begin position="1"/>
        <end position="561"/>
    </location>
</feature>
<feature type="domain" description="C2 B9-type" evidence="4">
    <location>
        <begin position="314"/>
        <end position="442"/>
    </location>
</feature>
<protein>
    <recommendedName>
        <fullName evidence="6">Tectonic-like complex member MKS1</fullName>
    </recommendedName>
    <alternativeName>
        <fullName>Meckel syndrome type 1 protein homolog</fullName>
    </alternativeName>
</protein>
<reference key="1">
    <citation type="journal article" date="2004" name="Nature">
        <title>Genome sequence of the Brown Norway rat yields insights into mammalian evolution.</title>
        <authorList>
            <person name="Gibbs R.A."/>
            <person name="Weinstock G.M."/>
            <person name="Metzker M.L."/>
            <person name="Muzny D.M."/>
            <person name="Sodergren E.J."/>
            <person name="Scherer S."/>
            <person name="Scott G."/>
            <person name="Steffen D."/>
            <person name="Worley K.C."/>
            <person name="Burch P.E."/>
            <person name="Okwuonu G."/>
            <person name="Hines S."/>
            <person name="Lewis L."/>
            <person name="Deramo C."/>
            <person name="Delgado O."/>
            <person name="Dugan-Rocha S."/>
            <person name="Miner G."/>
            <person name="Morgan M."/>
            <person name="Hawes A."/>
            <person name="Gill R."/>
            <person name="Holt R.A."/>
            <person name="Adams M.D."/>
            <person name="Amanatides P.G."/>
            <person name="Baden-Tillson H."/>
            <person name="Barnstead M."/>
            <person name="Chin S."/>
            <person name="Evans C.A."/>
            <person name="Ferriera S."/>
            <person name="Fosler C."/>
            <person name="Glodek A."/>
            <person name="Gu Z."/>
            <person name="Jennings D."/>
            <person name="Kraft C.L."/>
            <person name="Nguyen T."/>
            <person name="Pfannkoch C.M."/>
            <person name="Sitter C."/>
            <person name="Sutton G.G."/>
            <person name="Venter J.C."/>
            <person name="Woodage T."/>
            <person name="Smith D."/>
            <person name="Lee H.-M."/>
            <person name="Gustafson E."/>
            <person name="Cahill P."/>
            <person name="Kana A."/>
            <person name="Doucette-Stamm L."/>
            <person name="Weinstock K."/>
            <person name="Fechtel K."/>
            <person name="Weiss R.B."/>
            <person name="Dunn D.M."/>
            <person name="Green E.D."/>
            <person name="Blakesley R.W."/>
            <person name="Bouffard G.G."/>
            <person name="De Jong P.J."/>
            <person name="Osoegawa K."/>
            <person name="Zhu B."/>
            <person name="Marra M."/>
            <person name="Schein J."/>
            <person name="Bosdet I."/>
            <person name="Fjell C."/>
            <person name="Jones S."/>
            <person name="Krzywinski M."/>
            <person name="Mathewson C."/>
            <person name="Siddiqui A."/>
            <person name="Wye N."/>
            <person name="McPherson J."/>
            <person name="Zhao S."/>
            <person name="Fraser C.M."/>
            <person name="Shetty J."/>
            <person name="Shatsman S."/>
            <person name="Geer K."/>
            <person name="Chen Y."/>
            <person name="Abramzon S."/>
            <person name="Nierman W.C."/>
            <person name="Havlak P.H."/>
            <person name="Chen R."/>
            <person name="Durbin K.J."/>
            <person name="Egan A."/>
            <person name="Ren Y."/>
            <person name="Song X.-Z."/>
            <person name="Li B."/>
            <person name="Liu Y."/>
            <person name="Qin X."/>
            <person name="Cawley S."/>
            <person name="Cooney A.J."/>
            <person name="D'Souza L.M."/>
            <person name="Martin K."/>
            <person name="Wu J.Q."/>
            <person name="Gonzalez-Garay M.L."/>
            <person name="Jackson A.R."/>
            <person name="Kalafus K.J."/>
            <person name="McLeod M.P."/>
            <person name="Milosavljevic A."/>
            <person name="Virk D."/>
            <person name="Volkov A."/>
            <person name="Wheeler D.A."/>
            <person name="Zhang Z."/>
            <person name="Bailey J.A."/>
            <person name="Eichler E.E."/>
            <person name="Tuzun E."/>
            <person name="Birney E."/>
            <person name="Mongin E."/>
            <person name="Ureta-Vidal A."/>
            <person name="Woodwark C."/>
            <person name="Zdobnov E."/>
            <person name="Bork P."/>
            <person name="Suyama M."/>
            <person name="Torrents D."/>
            <person name="Alexandersson M."/>
            <person name="Trask B.J."/>
            <person name="Young J.M."/>
            <person name="Huang H."/>
            <person name="Wang H."/>
            <person name="Xing H."/>
            <person name="Daniels S."/>
            <person name="Gietzen D."/>
            <person name="Schmidt J."/>
            <person name="Stevens K."/>
            <person name="Vitt U."/>
            <person name="Wingrove J."/>
            <person name="Camara F."/>
            <person name="Mar Alba M."/>
            <person name="Abril J.F."/>
            <person name="Guigo R."/>
            <person name="Smit A."/>
            <person name="Dubchak I."/>
            <person name="Rubin E.M."/>
            <person name="Couronne O."/>
            <person name="Poliakov A."/>
            <person name="Huebner N."/>
            <person name="Ganten D."/>
            <person name="Goesele C."/>
            <person name="Hummel O."/>
            <person name="Kreitler T."/>
            <person name="Lee Y.-A."/>
            <person name="Monti J."/>
            <person name="Schulz H."/>
            <person name="Zimdahl H."/>
            <person name="Himmelbauer H."/>
            <person name="Lehrach H."/>
            <person name="Jacob H.J."/>
            <person name="Bromberg S."/>
            <person name="Gullings-Handley J."/>
            <person name="Jensen-Seaman M.I."/>
            <person name="Kwitek A.E."/>
            <person name="Lazar J."/>
            <person name="Pasko D."/>
            <person name="Tonellato P.J."/>
            <person name="Twigger S."/>
            <person name="Ponting C.P."/>
            <person name="Duarte J.M."/>
            <person name="Rice S."/>
            <person name="Goodstadt L."/>
            <person name="Beatson S.A."/>
            <person name="Emes R.D."/>
            <person name="Winter E.E."/>
            <person name="Webber C."/>
            <person name="Brandt P."/>
            <person name="Nyakatura G."/>
            <person name="Adetobi M."/>
            <person name="Chiaromonte F."/>
            <person name="Elnitski L."/>
            <person name="Eswara P."/>
            <person name="Hardison R.C."/>
            <person name="Hou M."/>
            <person name="Kolbe D."/>
            <person name="Makova K."/>
            <person name="Miller W."/>
            <person name="Nekrutenko A."/>
            <person name="Riemer C."/>
            <person name="Schwartz S."/>
            <person name="Taylor J."/>
            <person name="Yang S."/>
            <person name="Zhang Y."/>
            <person name="Lindpaintner K."/>
            <person name="Andrews T.D."/>
            <person name="Caccamo M."/>
            <person name="Clamp M."/>
            <person name="Clarke L."/>
            <person name="Curwen V."/>
            <person name="Durbin R.M."/>
            <person name="Eyras E."/>
            <person name="Searle S.M."/>
            <person name="Cooper G.M."/>
            <person name="Batzoglou S."/>
            <person name="Brudno M."/>
            <person name="Sidow A."/>
            <person name="Stone E.A."/>
            <person name="Payseur B.A."/>
            <person name="Bourque G."/>
            <person name="Lopez-Otin C."/>
            <person name="Puente X.S."/>
            <person name="Chakrabarti K."/>
            <person name="Chatterji S."/>
            <person name="Dewey C."/>
            <person name="Pachter L."/>
            <person name="Bray N."/>
            <person name="Yap V.B."/>
            <person name="Caspi A."/>
            <person name="Tesler G."/>
            <person name="Pevzner P.A."/>
            <person name="Haussler D."/>
            <person name="Roskin K.M."/>
            <person name="Baertsch R."/>
            <person name="Clawson H."/>
            <person name="Furey T.S."/>
            <person name="Hinrichs A.S."/>
            <person name="Karolchik D."/>
            <person name="Kent W.J."/>
            <person name="Rosenbloom K.R."/>
            <person name="Trumbower H."/>
            <person name="Weirauch M."/>
            <person name="Cooper D.N."/>
            <person name="Stenson P.D."/>
            <person name="Ma B."/>
            <person name="Brent M."/>
            <person name="Arumugam M."/>
            <person name="Shteynberg D."/>
            <person name="Copley R.R."/>
            <person name="Taylor M.S."/>
            <person name="Riethman H."/>
            <person name="Mudunuri U."/>
            <person name="Peterson J."/>
            <person name="Guyer M."/>
            <person name="Felsenfeld A."/>
            <person name="Old S."/>
            <person name="Mockrin S."/>
            <person name="Collins F.S."/>
        </authorList>
    </citation>
    <scope>NUCLEOTIDE SEQUENCE [LARGE SCALE GENOMIC DNA]</scope>
    <source>
        <strain>Brown Norway</strain>
    </source>
</reference>
<reference key="2">
    <citation type="journal article" date="2004" name="Genome Res.">
        <title>The status, quality, and expansion of the NIH full-length cDNA project: the Mammalian Gene Collection (MGC).</title>
        <authorList>
            <consortium name="The MGC Project Team"/>
        </authorList>
    </citation>
    <scope>NUCLEOTIDE SEQUENCE [LARGE SCALE MRNA] OF 2-561</scope>
    <source>
        <tissue>Prostate</tissue>
    </source>
</reference>
<reference key="3">
    <citation type="journal article" date="2009" name="Hum. Mol. Genet.">
        <title>Ciliary and centrosomal defects associated with mutation and depletion of the Meckel syndrome genes MKS1 and MKS3.</title>
        <authorList>
            <person name="Tammachote R."/>
            <person name="Hommerding C.J."/>
            <person name="Sinders R.M."/>
            <person name="Miller C.A."/>
            <person name="Czarnecki P.G."/>
            <person name="Leightner A.C."/>
            <person name="Salisbury J.L."/>
            <person name="Ward C.J."/>
            <person name="Torres V.E."/>
            <person name="Gattone V.H. II"/>
            <person name="Harris P.C."/>
        </authorList>
    </citation>
    <scope>FUNCTION</scope>
</reference>
<sequence length="561" mass="64523">MAEAVWSTDTGEAVYRSRDPVRNLRLRVHLQRITSSNFLHYQPAAQMGKDLIDLATFKPPQAASGHRPDEEEEEEVIIGWQEKLFSQFEVDLYQNESACQSPLDHQYRQEVLKLENSGGRKNRRIFTYTDSDRYTDLEEYCQKITTSAGEAPSFLVERMANVRRRRQDRRGVEGSKLKSRIITWEPSEDFIRNSHAINTPLQTMYIMADLGPYGKLGYKIHEHVLCVLKVDSNGVITVKPDFTGIKGPYRIETEGEKQEHTSAWKYTIDNVSSLAQPEEEEREQRVFKDLYGRHKEYLSSLVGTDFEMIAPGALRLFVNGEVVSARGYEHDNLYVHFFVELPATNWSSPSFQQLSGVTQTCVTRSLGMDKVAYFSFPFTFEAFFLHEDESDESLPEWPVLYCKVLSLDFWQRYRVEGYGAVVLPVTPGSHTLTASTWRPMELGLVAELRRFFIGGSLELEDPSYVRIPGTFKGERLSRFGFRTETTGTVTFRLHCLQQSRAFMESNSLRKQMRSVLDRLEGFSQQSSTHNVLEAFRRARRRMQEARESLPQDLVSPTGTLA</sequence>
<comment type="function">
    <text evidence="1 5">Component of the tectonic-like complex, a complex localized at the transition zone of primary cilia and acting as a barrier that prevents diffusion of transmembrane proteins between the cilia and plasma membranes (By similarity). Involved in centrosome migration to the apical cell surface during early ciliogenesis. Required for ciliary structure and function, including a role in regulating length and appropriate number through modulating centrosome duplication. Required for cell branching morphology.</text>
</comment>
<comment type="subunit">
    <text evidence="2 3">Part of the tectonic-like complex (also named B9 complex) (By similarity). Interacts with TMEM107 (By similarity). Interacts with TCTN3, AHI1, TCTN1, TCTN2, CC2D2A (By similarity). Interacts with FLNA. Interacts with TMEM67 (By similarity). Interacts with B9D1 and B9D2 (By similarity).</text>
</comment>
<comment type="subcellular location">
    <subcellularLocation>
        <location evidence="1">Cytoplasm</location>
        <location evidence="1">Cytoskeleton</location>
        <location evidence="1">Cilium basal body</location>
    </subcellularLocation>
    <subcellularLocation>
        <location evidence="1">Cytoplasm</location>
        <location evidence="1">Cytoskeleton</location>
        <location evidence="1">Microtubule organizing center</location>
        <location evidence="1">Centrosome</location>
    </subcellularLocation>
    <text evidence="1">Localizes at the transition zone, a region between the basal body and the ciliary axoneme.</text>
</comment>
<comment type="sequence caution" evidence="6">
    <conflict type="erroneous initiation">
        <sequence resource="EMBL-CDS" id="AAH99806"/>
    </conflict>
</comment>
<keyword id="KW-0966">Cell projection</keyword>
<keyword id="KW-0969">Cilium</keyword>
<keyword id="KW-0970">Cilium biogenesis/degradation</keyword>
<keyword id="KW-0963">Cytoplasm</keyword>
<keyword id="KW-0206">Cytoskeleton</keyword>
<keyword id="KW-1185">Reference proteome</keyword>
<name>MKS1_RAT</name>
<accession>Q499Q5</accession>
<dbReference type="EMBL" id="AABR03074131">
    <property type="status" value="NOT_ANNOTATED_CDS"/>
    <property type="molecule type" value="Genomic_DNA"/>
</dbReference>
<dbReference type="EMBL" id="BC099806">
    <property type="protein sequence ID" value="AAH99806.1"/>
    <property type="status" value="ALT_INIT"/>
    <property type="molecule type" value="mRNA"/>
</dbReference>
<dbReference type="RefSeq" id="NP_001030089.2">
    <property type="nucleotide sequence ID" value="NM_001034917.2"/>
</dbReference>
<dbReference type="SMR" id="Q499Q5"/>
<dbReference type="FunCoup" id="Q499Q5">
    <property type="interactions" value="1316"/>
</dbReference>
<dbReference type="STRING" id="10116.ENSRNOP00000011500"/>
<dbReference type="GlyGen" id="Q499Q5">
    <property type="glycosylation" value="1 site"/>
</dbReference>
<dbReference type="PhosphoSitePlus" id="Q499Q5"/>
<dbReference type="PaxDb" id="10116-ENSRNOP00000011500"/>
<dbReference type="GeneID" id="287612"/>
<dbReference type="KEGG" id="rno:287612"/>
<dbReference type="AGR" id="RGD:1565186"/>
<dbReference type="CTD" id="54903"/>
<dbReference type="RGD" id="1565186">
    <property type="gene designation" value="Mks1"/>
</dbReference>
<dbReference type="eggNOG" id="KOG4446">
    <property type="taxonomic scope" value="Eukaryota"/>
</dbReference>
<dbReference type="InParanoid" id="Q499Q5"/>
<dbReference type="PhylomeDB" id="Q499Q5"/>
<dbReference type="Reactome" id="R-RNO-5610787">
    <property type="pathway name" value="Hedgehog 'off' state"/>
</dbReference>
<dbReference type="Reactome" id="R-RNO-5620912">
    <property type="pathway name" value="Anchoring of the basal body to the plasma membrane"/>
</dbReference>
<dbReference type="PRO" id="PR:Q499Q5"/>
<dbReference type="Proteomes" id="UP000002494">
    <property type="component" value="Unplaced"/>
</dbReference>
<dbReference type="GO" id="GO:0005814">
    <property type="term" value="C:centriole"/>
    <property type="evidence" value="ECO:0000266"/>
    <property type="project" value="RGD"/>
</dbReference>
<dbReference type="GO" id="GO:0005813">
    <property type="term" value="C:centrosome"/>
    <property type="evidence" value="ECO:0000250"/>
    <property type="project" value="UniProtKB"/>
</dbReference>
<dbReference type="GO" id="GO:0036064">
    <property type="term" value="C:ciliary basal body"/>
    <property type="evidence" value="ECO:0000250"/>
    <property type="project" value="UniProtKB"/>
</dbReference>
<dbReference type="GO" id="GO:0035869">
    <property type="term" value="C:ciliary transition zone"/>
    <property type="evidence" value="ECO:0000266"/>
    <property type="project" value="RGD"/>
</dbReference>
<dbReference type="GO" id="GO:0005737">
    <property type="term" value="C:cytoplasm"/>
    <property type="evidence" value="ECO:0000266"/>
    <property type="project" value="RGD"/>
</dbReference>
<dbReference type="GO" id="GO:0016020">
    <property type="term" value="C:membrane"/>
    <property type="evidence" value="ECO:0000266"/>
    <property type="project" value="RGD"/>
</dbReference>
<dbReference type="GO" id="GO:0036038">
    <property type="term" value="C:MKS complex"/>
    <property type="evidence" value="ECO:0000250"/>
    <property type="project" value="UniProtKB"/>
</dbReference>
<dbReference type="GO" id="GO:0048754">
    <property type="term" value="P:branching morphogenesis of an epithelial tube"/>
    <property type="evidence" value="ECO:0000266"/>
    <property type="project" value="RGD"/>
</dbReference>
<dbReference type="GO" id="GO:0060411">
    <property type="term" value="P:cardiac septum morphogenesis"/>
    <property type="evidence" value="ECO:0000266"/>
    <property type="project" value="RGD"/>
</dbReference>
<dbReference type="GO" id="GO:0060271">
    <property type="term" value="P:cilium assembly"/>
    <property type="evidence" value="ECO:0000250"/>
    <property type="project" value="UniProtKB"/>
</dbReference>
<dbReference type="GO" id="GO:0061009">
    <property type="term" value="P:common bile duct development"/>
    <property type="evidence" value="ECO:0000266"/>
    <property type="project" value="RGD"/>
</dbReference>
<dbReference type="GO" id="GO:0007368">
    <property type="term" value="P:determination of left/right symmetry"/>
    <property type="evidence" value="ECO:0000266"/>
    <property type="project" value="RGD"/>
</dbReference>
<dbReference type="GO" id="GO:1990403">
    <property type="term" value="P:embryonic brain development"/>
    <property type="evidence" value="ECO:0000266"/>
    <property type="project" value="RGD"/>
</dbReference>
<dbReference type="GO" id="GO:0042733">
    <property type="term" value="P:embryonic digit morphogenesis"/>
    <property type="evidence" value="ECO:0000266"/>
    <property type="project" value="RGD"/>
</dbReference>
<dbReference type="GO" id="GO:0048706">
    <property type="term" value="P:embryonic skeletal system development"/>
    <property type="evidence" value="ECO:0000266"/>
    <property type="project" value="RGD"/>
</dbReference>
<dbReference type="GO" id="GO:0010669">
    <property type="term" value="P:epithelial structure maintenance"/>
    <property type="evidence" value="ECO:0000266"/>
    <property type="project" value="RGD"/>
</dbReference>
<dbReference type="GO" id="GO:0060322">
    <property type="term" value="P:head development"/>
    <property type="evidence" value="ECO:0000266"/>
    <property type="project" value="RGD"/>
</dbReference>
<dbReference type="GO" id="GO:0060122">
    <property type="term" value="P:inner ear receptor cell stereocilium organization"/>
    <property type="evidence" value="ECO:0000266"/>
    <property type="project" value="RGD"/>
</dbReference>
<dbReference type="GO" id="GO:0044458">
    <property type="term" value="P:motile cilium assembly"/>
    <property type="evidence" value="ECO:0000266"/>
    <property type="project" value="RGD"/>
</dbReference>
<dbReference type="GO" id="GO:0001843">
    <property type="term" value="P:neural tube closure"/>
    <property type="evidence" value="ECO:0000266"/>
    <property type="project" value="RGD"/>
</dbReference>
<dbReference type="GO" id="GO:1905515">
    <property type="term" value="P:non-motile cilium assembly"/>
    <property type="evidence" value="ECO:0000266"/>
    <property type="project" value="RGD"/>
</dbReference>
<dbReference type="GO" id="GO:0060828">
    <property type="term" value="P:regulation of canonical Wnt signaling pathway"/>
    <property type="evidence" value="ECO:0000266"/>
    <property type="project" value="RGD"/>
</dbReference>
<dbReference type="GO" id="GO:0008589">
    <property type="term" value="P:regulation of smoothened signaling pathway"/>
    <property type="evidence" value="ECO:0000266"/>
    <property type="project" value="RGD"/>
</dbReference>
<dbReference type="GO" id="GO:2000095">
    <property type="term" value="P:regulation of Wnt signaling pathway, planar cell polarity pathway"/>
    <property type="evidence" value="ECO:0000266"/>
    <property type="project" value="RGD"/>
</dbReference>
<dbReference type="GO" id="GO:0003271">
    <property type="term" value="P:smoothened signaling pathway involved in regulation of secondary heart field cardioblast proliferation"/>
    <property type="evidence" value="ECO:0000266"/>
    <property type="project" value="RGD"/>
</dbReference>
<dbReference type="InterPro" id="IPR010796">
    <property type="entry name" value="C2_B9-type_dom"/>
</dbReference>
<dbReference type="PANTHER" id="PTHR12968">
    <property type="entry name" value="B9 DOMAIN-CONTAINING"/>
    <property type="match status" value="1"/>
</dbReference>
<dbReference type="PANTHER" id="PTHR12968:SF4">
    <property type="entry name" value="TECTONIC-LIKE COMPLEX MEMBER MKS1"/>
    <property type="match status" value="1"/>
</dbReference>
<dbReference type="Pfam" id="PF07162">
    <property type="entry name" value="B9-C2"/>
    <property type="match status" value="1"/>
</dbReference>
<dbReference type="PROSITE" id="PS51381">
    <property type="entry name" value="C2_B9"/>
    <property type="match status" value="1"/>
</dbReference>
<evidence type="ECO:0000250" key="1"/>
<evidence type="ECO:0000250" key="2">
    <source>
        <dbReference type="UniProtKB" id="Q5SW45"/>
    </source>
</evidence>
<evidence type="ECO:0000250" key="3">
    <source>
        <dbReference type="UniProtKB" id="Q9NXB0"/>
    </source>
</evidence>
<evidence type="ECO:0000255" key="4">
    <source>
        <dbReference type="PROSITE-ProRule" id="PRU00713"/>
    </source>
</evidence>
<evidence type="ECO:0000269" key="5">
    <source>
    </source>
</evidence>
<evidence type="ECO:0000305" key="6"/>
<proteinExistence type="evidence at transcript level"/>